<sequence>MPSSQAQADLWRHTLYYLTSMGLRCAVKLGIPTAIHNLGGVSSLPDLAAALSIPASKQPFLGRLMRALVTSGVFANGKERLLGGLFRLNPLSRILVEGVVAEEHHSQTSFVLAGTSRHYMEAALGMADWFKKDATGPVPTVFEDVHSASLFDESTAALDPELDALVTEGLAAHDNLGIGTIIREFHDLFKGLVSLTDFCCGDGTTSRAITKAHPHVKFTVLDLPKVIDKTPSDGIVNYFAGDLFHTVPKAQAVMLKLVLHHLSYEDCFKILTQCKDAIPSREEGGKVIVIDIVVAPSLGQVMFKEQTLMDILMLVFTRGRQRSENNWHELFTKAGFSDYKIVKKLGARGVIEVYK</sequence>
<feature type="chain" id="PRO_0000454879" description="Daphnetin O-methyltransferase 1">
    <location>
        <begin position="1"/>
        <end position="355"/>
    </location>
</feature>
<feature type="active site" description="Proton acceptor" evidence="2">
    <location>
        <position position="260"/>
    </location>
</feature>
<feature type="binding site" evidence="1">
    <location>
        <position position="222"/>
    </location>
    <ligand>
        <name>S-adenosyl-L-homocysteine</name>
        <dbReference type="ChEBI" id="CHEBI:57856"/>
    </ligand>
</feature>
<feature type="binding site" evidence="1">
    <location>
        <position position="242"/>
    </location>
    <ligand>
        <name>S-adenosyl-L-homocysteine</name>
        <dbReference type="ChEBI" id="CHEBI:57856"/>
    </ligand>
</feature>
<feature type="binding site" evidence="1">
    <location>
        <position position="256"/>
    </location>
    <ligand>
        <name>S-adenosyl-L-homocysteine</name>
        <dbReference type="ChEBI" id="CHEBI:57856"/>
    </ligand>
</feature>
<organism>
    <name type="scientific">Secale cereale</name>
    <name type="common">Rye</name>
    <dbReference type="NCBI Taxonomy" id="4550"/>
    <lineage>
        <taxon>Eukaryota</taxon>
        <taxon>Viridiplantae</taxon>
        <taxon>Streptophyta</taxon>
        <taxon>Embryophyta</taxon>
        <taxon>Tracheophyta</taxon>
        <taxon>Spermatophyta</taxon>
        <taxon>Magnoliopsida</taxon>
        <taxon>Liliopsida</taxon>
        <taxon>Poales</taxon>
        <taxon>Poaceae</taxon>
        <taxon>BOP clade</taxon>
        <taxon>Pooideae</taxon>
        <taxon>Triticodae</taxon>
        <taxon>Triticeae</taxon>
        <taxon>Hordeinae</taxon>
        <taxon>Secale</taxon>
    </lineage>
</organism>
<evidence type="ECO:0000250" key="1">
    <source>
        <dbReference type="UniProtKB" id="P28002"/>
    </source>
</evidence>
<evidence type="ECO:0000255" key="2">
    <source>
        <dbReference type="PROSITE-ProRule" id="PRU01020"/>
    </source>
</evidence>
<evidence type="ECO:0000269" key="3">
    <source>
    </source>
</evidence>
<evidence type="ECO:0000303" key="4">
    <source>
    </source>
</evidence>
<evidence type="ECO:0000305" key="5"/>
<protein>
    <recommendedName>
        <fullName evidence="4">Daphnetin O-methyltransferase 1</fullName>
        <shortName evidence="4">ScOMT1</shortName>
        <ecNumber evidence="2 3">2.1.1.-</ecNumber>
    </recommendedName>
</protein>
<keyword id="KW-0489">Methyltransferase</keyword>
<keyword id="KW-0949">S-adenosyl-L-methionine</keyword>
<keyword id="KW-0808">Transferase</keyword>
<proteinExistence type="evidence at protein level"/>
<accession>Q84XW5</accession>
<gene>
    <name evidence="4" type="primary">OMT1</name>
</gene>
<dbReference type="EC" id="2.1.1.-" evidence="2 3"/>
<dbReference type="EMBL" id="AY177404">
    <property type="protein sequence ID" value="AAO23335.1"/>
    <property type="molecule type" value="mRNA"/>
</dbReference>
<dbReference type="SMR" id="Q84XW5"/>
<dbReference type="GO" id="GO:0102358">
    <property type="term" value="F:daphnetin-8-O-methyltransferase activity"/>
    <property type="evidence" value="ECO:0000314"/>
    <property type="project" value="UniProtKB"/>
</dbReference>
<dbReference type="GO" id="GO:0008171">
    <property type="term" value="F:O-methyltransferase activity"/>
    <property type="evidence" value="ECO:0000314"/>
    <property type="project" value="UniProtKB"/>
</dbReference>
<dbReference type="GO" id="GO:0046983">
    <property type="term" value="F:protein dimerization activity"/>
    <property type="evidence" value="ECO:0007669"/>
    <property type="project" value="InterPro"/>
</dbReference>
<dbReference type="GO" id="GO:0008757">
    <property type="term" value="F:S-adenosylmethionine-dependent methyltransferase activity"/>
    <property type="evidence" value="ECO:0000314"/>
    <property type="project" value="UniProtKB"/>
</dbReference>
<dbReference type="GO" id="GO:0009804">
    <property type="term" value="P:coumarin metabolic process"/>
    <property type="evidence" value="ECO:0000314"/>
    <property type="project" value="UniProtKB"/>
</dbReference>
<dbReference type="GO" id="GO:0032259">
    <property type="term" value="P:methylation"/>
    <property type="evidence" value="ECO:0007669"/>
    <property type="project" value="UniProtKB-KW"/>
</dbReference>
<dbReference type="GO" id="GO:0009409">
    <property type="term" value="P:response to cold"/>
    <property type="evidence" value="ECO:0000270"/>
    <property type="project" value="UniProtKB"/>
</dbReference>
<dbReference type="GO" id="GO:0009644">
    <property type="term" value="P:response to high light intensity"/>
    <property type="evidence" value="ECO:0000270"/>
    <property type="project" value="UniProtKB"/>
</dbReference>
<dbReference type="GO" id="GO:0044550">
    <property type="term" value="P:secondary metabolite biosynthetic process"/>
    <property type="evidence" value="ECO:0000314"/>
    <property type="project" value="UniProtKB"/>
</dbReference>
<dbReference type="FunFam" id="3.40.50.150:FF:000185">
    <property type="entry name" value="O-methyltransferase family protein"/>
    <property type="match status" value="1"/>
</dbReference>
<dbReference type="Gene3D" id="3.40.50.150">
    <property type="entry name" value="Vaccinia Virus protein VP39"/>
    <property type="match status" value="1"/>
</dbReference>
<dbReference type="Gene3D" id="1.10.10.10">
    <property type="entry name" value="Winged helix-like DNA-binding domain superfamily/Winged helix DNA-binding domain"/>
    <property type="match status" value="1"/>
</dbReference>
<dbReference type="InterPro" id="IPR016461">
    <property type="entry name" value="COMT-like"/>
</dbReference>
<dbReference type="InterPro" id="IPR001077">
    <property type="entry name" value="O_MeTrfase_dom"/>
</dbReference>
<dbReference type="InterPro" id="IPR012967">
    <property type="entry name" value="Plant_O-MeTrfase_dimerisation"/>
</dbReference>
<dbReference type="InterPro" id="IPR029063">
    <property type="entry name" value="SAM-dependent_MTases_sf"/>
</dbReference>
<dbReference type="InterPro" id="IPR036388">
    <property type="entry name" value="WH-like_DNA-bd_sf"/>
</dbReference>
<dbReference type="InterPro" id="IPR036390">
    <property type="entry name" value="WH_DNA-bd_sf"/>
</dbReference>
<dbReference type="PANTHER" id="PTHR11746">
    <property type="entry name" value="O-METHYLTRANSFERASE"/>
    <property type="match status" value="1"/>
</dbReference>
<dbReference type="Pfam" id="PF08100">
    <property type="entry name" value="Dimerisation"/>
    <property type="match status" value="1"/>
</dbReference>
<dbReference type="Pfam" id="PF00891">
    <property type="entry name" value="Methyltransf_2"/>
    <property type="match status" value="1"/>
</dbReference>
<dbReference type="PIRSF" id="PIRSF005739">
    <property type="entry name" value="O-mtase"/>
    <property type="match status" value="1"/>
</dbReference>
<dbReference type="SUPFAM" id="SSF53335">
    <property type="entry name" value="S-adenosyl-L-methionine-dependent methyltransferases"/>
    <property type="match status" value="1"/>
</dbReference>
<dbReference type="SUPFAM" id="SSF46785">
    <property type="entry name" value="Winged helix' DNA-binding domain"/>
    <property type="match status" value="1"/>
</dbReference>
<dbReference type="PROSITE" id="PS51683">
    <property type="entry name" value="SAM_OMT_II"/>
    <property type="match status" value="1"/>
</dbReference>
<name>OMT1_SECCE</name>
<reference key="1">
    <citation type="journal article" date="2003" name="J. Biol. Chem.">
        <title>Daphnetin methylation by a novel O-methyltransferase is associated with cold acclimation and photosystem II excitation pressure in rye.</title>
        <authorList>
            <person name="N'Dong C."/>
            <person name="Anzellotti D."/>
            <person name="Ibrahim R.K."/>
            <person name="Huner N.P.A."/>
            <person name="Sarhan F."/>
        </authorList>
    </citation>
    <scope>NUCLEOTIDE SEQUENCE [MRNA]</scope>
    <scope>FUNCTION</scope>
    <scope>PATHWAY</scope>
    <scope>CATALYTIC ACTIVITY</scope>
    <scope>INDUCTION BY COLD AND PHOTOSYSTEM II EXCITATION</scope>
    <scope>BIOPHYSICOCHEMICAL PROPERTIES</scope>
    <source>
        <strain>cv. Musketeer</strain>
    </source>
</reference>
<comment type="function">
    <text evidence="3">O-methyltransferase involved in the biosynthesis of coumarins natural products such as daphnetin derivatives (PubMed:12480941). Catalyzes specifically the methylation of daphnetin (7,8-dihydroxycoumarin) to produce hydrangetin (7-hydroxy-8-methoxycoumarin) (PubMed:12480941). Probably involved in acclimation to low temperature conditions (PubMed:12480941).</text>
</comment>
<comment type="catalytic activity">
    <reaction evidence="3">
        <text>7,8-dihydroxycoumarin + S-adenosyl-L-methionine = 7-hydroxy-8-methoxycoumarin + S-adenosyl-L-homocysteine + H(+)</text>
        <dbReference type="Rhea" id="RHEA:68960"/>
        <dbReference type="ChEBI" id="CHEBI:15378"/>
        <dbReference type="ChEBI" id="CHEBI:17313"/>
        <dbReference type="ChEBI" id="CHEBI:57856"/>
        <dbReference type="ChEBI" id="CHEBI:59789"/>
        <dbReference type="ChEBI" id="CHEBI:180544"/>
    </reaction>
    <physiologicalReaction direction="left-to-right" evidence="3">
        <dbReference type="Rhea" id="RHEA:68961"/>
    </physiologicalReaction>
</comment>
<comment type="biophysicochemical properties">
    <kinetics>
        <KM evidence="3">152 uM for 7,8-dihydroxycoumarin</KM>
        <KM evidence="3">19 uM for S-adenosyl-L-methionine</KM>
    </kinetics>
</comment>
<comment type="pathway">
    <text evidence="3">Aromatic compound metabolism.</text>
</comment>
<comment type="pathway">
    <text evidence="3">Secondary metabolite biosynthesis.</text>
</comment>
<comment type="induction">
    <text evidence="3">Induced by cold and photosystem II excitation pressure by high light illumination.</text>
</comment>
<comment type="similarity">
    <text evidence="2 5">Belongs to the class I-like SAM-binding methyltransferase superfamily. Cation-independent O-methyltransferase family. COMT subfamily.</text>
</comment>